<keyword id="KW-0067">ATP-binding</keyword>
<keyword id="KW-0963">Cytoplasm</keyword>
<keyword id="KW-0436">Ligase</keyword>
<keyword id="KW-0547">Nucleotide-binding</keyword>
<keyword id="KW-1185">Reference proteome</keyword>
<accession>O26325</accession>
<protein>
    <recommendedName>
        <fullName>Cyclic 2,3-diphosphoglycerate synthetase</fullName>
        <shortName>cDPGS</shortName>
        <ecNumber evidence="1">6.5.1.9</ecNumber>
    </recommendedName>
</protein>
<reference key="1">
    <citation type="journal article" date="1997" name="J. Bacteriol.">
        <title>Complete genome sequence of Methanobacterium thermoautotrophicum deltaH: functional analysis and comparative genomics.</title>
        <authorList>
            <person name="Smith D.R."/>
            <person name="Doucette-Stamm L.A."/>
            <person name="Deloughery C."/>
            <person name="Lee H.-M."/>
            <person name="Dubois J."/>
            <person name="Aldredge T."/>
            <person name="Bashirzadeh R."/>
            <person name="Blakely D."/>
            <person name="Cook R."/>
            <person name="Gilbert K."/>
            <person name="Harrison D."/>
            <person name="Hoang L."/>
            <person name="Keagle P."/>
            <person name="Lumm W."/>
            <person name="Pothier B."/>
            <person name="Qiu D."/>
            <person name="Spadafora R."/>
            <person name="Vicare R."/>
            <person name="Wang Y."/>
            <person name="Wierzbowski J."/>
            <person name="Gibson R."/>
            <person name="Jiwani N."/>
            <person name="Caruso A."/>
            <person name="Bush D."/>
            <person name="Safer H."/>
            <person name="Patwell D."/>
            <person name="Prabhakar S."/>
            <person name="McDougall S."/>
            <person name="Shimer G."/>
            <person name="Goyal A."/>
            <person name="Pietrovski S."/>
            <person name="Church G.M."/>
            <person name="Daniels C.J."/>
            <person name="Mao J.-I."/>
            <person name="Rice P."/>
            <person name="Noelling J."/>
            <person name="Reeve J.N."/>
        </authorList>
    </citation>
    <scope>NUCLEOTIDE SEQUENCE [LARGE SCALE GENOMIC DNA]</scope>
    <source>
        <strain>ATCC 29096 / DSM 1053 / JCM 10044 / NBRC 100330 / Delta H</strain>
    </source>
</reference>
<reference key="2">
    <citation type="journal article" date="1994" name="Arch. Microbiol.">
        <title>Cyclic 2,3-diphosphoglycerate metabolism in Methanobacterium thermoautotrophicum (strain Delta H): characterization of the synthetase reaction.</title>
        <authorList>
            <person name="van Alebeek G.-J.W.M."/>
            <person name="Tafazzul G."/>
            <person name="Kreuwels M.J.J."/>
            <person name="Keltjens J.T."/>
            <person name="Vogels G.D."/>
        </authorList>
    </citation>
    <scope>FUNCTION</scope>
    <scope>CATALYTIC ACTIVITY</scope>
    <scope>ACTIVITY REGULATION</scope>
    <scope>BIOPHYSICOCHEMICAL PROPERTIES</scope>
    <scope>INDUCTION</scope>
    <scope>SUBCELLULAR LOCATION</scope>
    <source>
        <strain>ATCC 29096 / DSM 1053 / JCM 10044 / NBRC 100330 / Delta H</strain>
    </source>
</reference>
<evidence type="ECO:0000269" key="1">
    <source ref="2"/>
</evidence>
<evidence type="ECO:0000305" key="2"/>
<organism>
    <name type="scientific">Methanothermobacter thermautotrophicus (strain ATCC 29096 / DSM 1053 / JCM 10044 / NBRC 100330 / Delta H)</name>
    <name type="common">Methanobacterium thermoautotrophicum</name>
    <dbReference type="NCBI Taxonomy" id="187420"/>
    <lineage>
        <taxon>Archaea</taxon>
        <taxon>Methanobacteriati</taxon>
        <taxon>Methanobacteriota</taxon>
        <taxon>Methanomada group</taxon>
        <taxon>Methanobacteria</taxon>
        <taxon>Methanobacteriales</taxon>
        <taxon>Methanobacteriaceae</taxon>
        <taxon>Methanothermobacter</taxon>
    </lineage>
</organism>
<gene>
    <name type="primary">cpgS</name>
    <name type="ordered locus">MTH_223</name>
</gene>
<dbReference type="EC" id="6.5.1.9" evidence="1"/>
<dbReference type="EMBL" id="AE000666">
    <property type="protein sequence ID" value="AAB84729.1"/>
    <property type="molecule type" value="Genomic_DNA"/>
</dbReference>
<dbReference type="PIR" id="F69127">
    <property type="entry name" value="F69127"/>
</dbReference>
<dbReference type="SMR" id="O26325"/>
<dbReference type="STRING" id="187420.MTH_223"/>
<dbReference type="PaxDb" id="187420-MTH_223"/>
<dbReference type="EnsemblBacteria" id="AAB84729">
    <property type="protein sequence ID" value="AAB84729"/>
    <property type="gene ID" value="MTH_223"/>
</dbReference>
<dbReference type="KEGG" id="mth:MTH_223"/>
<dbReference type="PATRIC" id="fig|187420.15.peg.192"/>
<dbReference type="HOGENOM" id="CLU_638764_0_0_2"/>
<dbReference type="InParanoid" id="O26325"/>
<dbReference type="Proteomes" id="UP000005223">
    <property type="component" value="Chromosome"/>
</dbReference>
<dbReference type="GO" id="GO:0005737">
    <property type="term" value="C:cytoplasm"/>
    <property type="evidence" value="ECO:0007669"/>
    <property type="project" value="UniProtKB-SubCell"/>
</dbReference>
<dbReference type="GO" id="GO:0005524">
    <property type="term" value="F:ATP binding"/>
    <property type="evidence" value="ECO:0007669"/>
    <property type="project" value="UniProtKB-KW"/>
</dbReference>
<dbReference type="GO" id="GO:0036356">
    <property type="term" value="F:cyclic 2,3-diphosphoglycerate synthetase activity"/>
    <property type="evidence" value="ECO:0007669"/>
    <property type="project" value="InterPro"/>
</dbReference>
<dbReference type="GO" id="GO:0016874">
    <property type="term" value="F:ligase activity"/>
    <property type="evidence" value="ECO:0007669"/>
    <property type="project" value="UniProtKB-UniRule"/>
</dbReference>
<dbReference type="GO" id="GO:0006094">
    <property type="term" value="P:gluconeogenesis"/>
    <property type="evidence" value="ECO:0007669"/>
    <property type="project" value="InterPro"/>
</dbReference>
<dbReference type="HAMAP" id="MF_01908">
    <property type="entry name" value="Cyc_PG_syn"/>
    <property type="match status" value="1"/>
</dbReference>
<dbReference type="InterPro" id="IPR016557">
    <property type="entry name" value="Cyc_diphosphoglycerate_synth"/>
</dbReference>
<dbReference type="PIRSF" id="PIRSF009445">
    <property type="entry name" value="Cyc_PG_syn"/>
    <property type="match status" value="1"/>
</dbReference>
<proteinExistence type="evidence at protein level"/>
<name>CPGS_METTH</name>
<sequence length="464" mass="51320">MFMKATETMICLVDGEHYLPVTRAAVETLDSMEHIDVKALIFIGGTEKLRTSSPEEYTEIMGRPVHFGDDPHRIPYKLIGELIRKYGADTVMDLSDEPVLDYSKRFRIASVVLGEGAVYRGPDFEFQPLTEYDILEKPSLKILGTGKRIGKTAVSAYAARLIHERQYNPCVVAMGRGGPEEPEIVHGDRIEITPEFLMEQSDKGVHAASDHWEDALMSRILTVGCRRCGGGMVGDVFITNMKRGAETANRLDADFVILEGSGAAIPPVKSNRHIVLVGANQPLINIKNFFGPFRIGLADLVIVTMCEEPMAGDEKVREIVDFIESINPEAEVITTVFRPKPLGEIEGKNVLFATTAPDSVKDLLVEYLESEYSCRVVGTTPHLSNRPLLQRDIERYIEDADVMLTELKAAAVDVATKDALEAGLEVIYCDNIPVVRDGAQDELDDAIISVVERAIADFNLRKTP</sequence>
<feature type="chain" id="PRO_0000313689" description="Cyclic 2,3-diphosphoglycerate synthetase">
    <location>
        <begin position="1"/>
        <end position="464"/>
    </location>
</feature>
<comment type="function">
    <text evidence="1">Catalyzes the formation of cyclic 2,3-diphosphoglycerate (cDPG) by formation of an intramolecular phosphoanhydride bond at the expense of ATP. Not able to catalyze cDPG hydrolysis. May be involved in osmotic balance.</text>
</comment>
<comment type="catalytic activity">
    <reaction evidence="1">
        <text>(2R)-2,3-bisphosphoglycerate + ATP + H(+) = cyclic (2R)-2,3-bisphosphoglycerate + ADP + phosphate</text>
        <dbReference type="Rhea" id="RHEA:42412"/>
        <dbReference type="ChEBI" id="CHEBI:15378"/>
        <dbReference type="ChEBI" id="CHEBI:30616"/>
        <dbReference type="ChEBI" id="CHEBI:43474"/>
        <dbReference type="ChEBI" id="CHEBI:58248"/>
        <dbReference type="ChEBI" id="CHEBI:79081"/>
        <dbReference type="ChEBI" id="CHEBI:456216"/>
        <dbReference type="EC" id="6.5.1.9"/>
    </reaction>
</comment>
<comment type="activity regulation">
    <text evidence="1">Activity decreases in response to phosphate limitation.</text>
</comment>
<comment type="biophysicochemical properties">
    <kinetics>
        <KM evidence="1">2 mM for ATP</KM>
        <KM evidence="1">21 mM for 2,3 diphosphoglycerate</KM>
    </kinetics>
    <phDependence>
        <text evidence="1">Optimum pH is 6.0.</text>
    </phDependence>
    <temperatureDependence>
        <text evidence="1">Optimum temperature is 65 degrees Celsius.</text>
    </temperatureDependence>
</comment>
<comment type="subcellular location">
    <subcellularLocation>
        <location evidence="1">Cytoplasm</location>
    </subcellularLocation>
</comment>
<comment type="induction">
    <text evidence="1">Constitutively expressed.</text>
</comment>
<comment type="similarity">
    <text evidence="2">Belongs to the cyclic 2,3-diphosphoglycerate synthetase family.</text>
</comment>